<dbReference type="EMBL" id="CP000937">
    <property type="protein sequence ID" value="ABZ87277.1"/>
    <property type="molecule type" value="Genomic_DNA"/>
</dbReference>
<dbReference type="SMR" id="B0TX19"/>
<dbReference type="KEGG" id="fph:Fphi_1055"/>
<dbReference type="eggNOG" id="COG0335">
    <property type="taxonomic scope" value="Bacteria"/>
</dbReference>
<dbReference type="HOGENOM" id="CLU_103507_2_2_6"/>
<dbReference type="GO" id="GO:0022625">
    <property type="term" value="C:cytosolic large ribosomal subunit"/>
    <property type="evidence" value="ECO:0007669"/>
    <property type="project" value="TreeGrafter"/>
</dbReference>
<dbReference type="GO" id="GO:0003735">
    <property type="term" value="F:structural constituent of ribosome"/>
    <property type="evidence" value="ECO:0007669"/>
    <property type="project" value="InterPro"/>
</dbReference>
<dbReference type="GO" id="GO:0006412">
    <property type="term" value="P:translation"/>
    <property type="evidence" value="ECO:0007669"/>
    <property type="project" value="UniProtKB-UniRule"/>
</dbReference>
<dbReference type="FunFam" id="2.30.30.790:FF:000001">
    <property type="entry name" value="50S ribosomal protein L19"/>
    <property type="match status" value="1"/>
</dbReference>
<dbReference type="Gene3D" id="2.30.30.790">
    <property type="match status" value="1"/>
</dbReference>
<dbReference type="HAMAP" id="MF_00402">
    <property type="entry name" value="Ribosomal_bL19"/>
    <property type="match status" value="1"/>
</dbReference>
<dbReference type="InterPro" id="IPR001857">
    <property type="entry name" value="Ribosomal_bL19"/>
</dbReference>
<dbReference type="InterPro" id="IPR018257">
    <property type="entry name" value="Ribosomal_bL19_CS"/>
</dbReference>
<dbReference type="InterPro" id="IPR038657">
    <property type="entry name" value="Ribosomal_bL19_sf"/>
</dbReference>
<dbReference type="InterPro" id="IPR008991">
    <property type="entry name" value="Translation_prot_SH3-like_sf"/>
</dbReference>
<dbReference type="NCBIfam" id="TIGR01024">
    <property type="entry name" value="rplS_bact"/>
    <property type="match status" value="1"/>
</dbReference>
<dbReference type="PANTHER" id="PTHR15680:SF9">
    <property type="entry name" value="LARGE RIBOSOMAL SUBUNIT PROTEIN BL19M"/>
    <property type="match status" value="1"/>
</dbReference>
<dbReference type="PANTHER" id="PTHR15680">
    <property type="entry name" value="RIBOSOMAL PROTEIN L19"/>
    <property type="match status" value="1"/>
</dbReference>
<dbReference type="Pfam" id="PF01245">
    <property type="entry name" value="Ribosomal_L19"/>
    <property type="match status" value="1"/>
</dbReference>
<dbReference type="PIRSF" id="PIRSF002191">
    <property type="entry name" value="Ribosomal_L19"/>
    <property type="match status" value="1"/>
</dbReference>
<dbReference type="PRINTS" id="PR00061">
    <property type="entry name" value="RIBOSOMALL19"/>
</dbReference>
<dbReference type="SUPFAM" id="SSF50104">
    <property type="entry name" value="Translation proteins SH3-like domain"/>
    <property type="match status" value="1"/>
</dbReference>
<dbReference type="PROSITE" id="PS01015">
    <property type="entry name" value="RIBOSOMAL_L19"/>
    <property type="match status" value="1"/>
</dbReference>
<protein>
    <recommendedName>
        <fullName evidence="1">Large ribosomal subunit protein bL19</fullName>
    </recommendedName>
    <alternativeName>
        <fullName evidence="2">50S ribosomal protein L19</fullName>
    </alternativeName>
</protein>
<comment type="function">
    <text evidence="1">This protein is located at the 30S-50S ribosomal subunit interface and may play a role in the structure and function of the aminoacyl-tRNA binding site.</text>
</comment>
<comment type="similarity">
    <text evidence="1">Belongs to the bacterial ribosomal protein bL19 family.</text>
</comment>
<feature type="chain" id="PRO_1000080352" description="Large ribosomal subunit protein bL19">
    <location>
        <begin position="1"/>
        <end position="115"/>
    </location>
</feature>
<reference key="1">
    <citation type="submission" date="2007-12" db="EMBL/GenBank/DDBJ databases">
        <title>Complete sequence of chromosome of Francisella philomiragia subsp. philomiragia ATCC 25017.</title>
        <authorList>
            <consortium name="US DOE Joint Genome Institute"/>
            <person name="Copeland A."/>
            <person name="Lucas S."/>
            <person name="Lapidus A."/>
            <person name="Barry K."/>
            <person name="Detter J.C."/>
            <person name="Glavina del Rio T."/>
            <person name="Hammon N."/>
            <person name="Israni S."/>
            <person name="Dalin E."/>
            <person name="Tice H."/>
            <person name="Pitluck S."/>
            <person name="Chain P."/>
            <person name="Malfatti S."/>
            <person name="Shin M."/>
            <person name="Vergez L."/>
            <person name="Schmutz J."/>
            <person name="Larimer F."/>
            <person name="Land M."/>
            <person name="Hauser L."/>
            <person name="Richardson P."/>
        </authorList>
    </citation>
    <scope>NUCLEOTIDE SEQUENCE [LARGE SCALE GENOMIC DNA]</scope>
    <source>
        <strain>ATCC 25017 / CCUG 19701 / FSC 153 / O#319-036</strain>
    </source>
</reference>
<proteinExistence type="inferred from homology"/>
<keyword id="KW-0687">Ribonucleoprotein</keyword>
<keyword id="KW-0689">Ribosomal protein</keyword>
<accession>B0TX19</accession>
<sequence length="115" mass="13283">MKNKFVELVEKSQIRTDLPEFNPGDSITVNLWIKEGDKQRIQAFKGFVLRKRNRGLHSAFTVRKMSSGMGVERTFQTHSPLIDSITVEKRADVRRAKLYYMRGLTGKAARIKEKV</sequence>
<organism>
    <name type="scientific">Francisella philomiragia subsp. philomiragia (strain ATCC 25017 / CCUG 19701 / FSC 153 / O#319-036)</name>
    <dbReference type="NCBI Taxonomy" id="484022"/>
    <lineage>
        <taxon>Bacteria</taxon>
        <taxon>Pseudomonadati</taxon>
        <taxon>Pseudomonadota</taxon>
        <taxon>Gammaproteobacteria</taxon>
        <taxon>Thiotrichales</taxon>
        <taxon>Francisellaceae</taxon>
        <taxon>Francisella</taxon>
    </lineage>
</organism>
<gene>
    <name evidence="1" type="primary">rplS</name>
    <name type="ordered locus">Fphi_1055</name>
</gene>
<evidence type="ECO:0000255" key="1">
    <source>
        <dbReference type="HAMAP-Rule" id="MF_00402"/>
    </source>
</evidence>
<evidence type="ECO:0000305" key="2"/>
<name>RL19_FRAP2</name>